<organism>
    <name type="scientific">Mus musculus</name>
    <name type="common">Mouse</name>
    <dbReference type="NCBI Taxonomy" id="10090"/>
    <lineage>
        <taxon>Eukaryota</taxon>
        <taxon>Metazoa</taxon>
        <taxon>Chordata</taxon>
        <taxon>Craniata</taxon>
        <taxon>Vertebrata</taxon>
        <taxon>Euteleostomi</taxon>
        <taxon>Mammalia</taxon>
        <taxon>Eutheria</taxon>
        <taxon>Euarchontoglires</taxon>
        <taxon>Glires</taxon>
        <taxon>Rodentia</taxon>
        <taxon>Myomorpha</taxon>
        <taxon>Muroidea</taxon>
        <taxon>Muridae</taxon>
        <taxon>Murinae</taxon>
        <taxon>Mus</taxon>
        <taxon>Mus</taxon>
    </lineage>
</organism>
<comment type="function">
    <text evidence="3">Cytoplasmic dynein 1 acts as a motor for the intracellular retrograde motility of vesicles and organelles along microtubules. Dynein has ATPase activity; the force-producing power stroke is thought to occur on release of ADP. Plays a role in mitotic spindle assembly and metaphase plate congression.</text>
</comment>
<comment type="subunit">
    <text evidence="2 7 8">Homodimer. The cytoplasmic dynein 1 complex consists of two catalytic heavy chains (HCs) and a number of non-catalytic subunits presented by intermediate chains (ICs), light intermediate chains (LICs) and light chains (LCs); the composition seems to vary in respect to the IC, LIC and LC composition. The heavy chain homodimer serves as a scaffold for the probable homodimeric assembly of the respective non-catalytic subunits. The ICs and LICs bind directly to the HC dimer and dynein LCs assemble on the IC dimer. Interacts with DYNC1LI1; DYNC1LI1 and DYNC1LI2 bind mutually exclusive to DYNC1H1. Interacts with DYNC1LI2; DYNC1LI1 and DYNC1LI2 bind mutually exclusive to DYNC1H1. Interacts with DYNC1I2 (By similarity). Interacts with BICD2 (PubMed:22956769). Interacts with DNALI1 (PubMed:16496424).</text>
</comment>
<comment type="interaction">
    <interactant intactId="EBI-645061">
        <id>Q9JHU4</id>
    </interactant>
    <interactant intactId="EBI-777188">
        <id>P07141</id>
        <label>Csf1</label>
    </interactant>
    <organismsDiffer>false</organismsDiffer>
    <experiments>2</experiments>
</comment>
<comment type="subcellular location">
    <subcellularLocation>
        <location>Cytoplasm</location>
        <location>Cytoskeleton</location>
    </subcellularLocation>
</comment>
<comment type="domain">
    <text>Dynein heavy chains probably consist of an N-terminal stem (which binds cargo and interacts with other dynein components), and the head or motor domain. The motor contains six tandemly-linked AAA domains in the head, which form a ring. A stalk-like structure (formed by two of the coiled coil domains) protrudes between AAA 4 and AAA 5 and terminates in a microtubule-binding site. A seventh domain may also contribute to this ring; it is not clear whether the N-terminus or the C-terminus forms this extra domain. There are four well-conserved and two non-conserved ATPase sites, one per AAA domain. Probably only one of these (within AAA 1) actually hydrolyzes ATP, the others may serve a regulatory function.</text>
</comment>
<comment type="disease">
    <text evidence="6">Defects in Dync1h1 are the cause of the 'Legs at odd angles' (LOA) phenotype, an autosomal dominant trait where affected animals display unusual twisting of the body and clenching of the hindlimbs when suspended by the tail. Heterozygotes suffer age-related progressive loss of muscle tone and locomotor ability without major reduction in life-span while homozygotes show a more severe phenotype with an inability to move or feed, and die within 24 hours of birth. LOA mutants display defects in migration of facial motor neuron cell bodies and impaired retrograde transport in spinal cord motor neurons.</text>
</comment>
<comment type="disease">
    <text evidence="6">Defects in Dync1h1 are the cause of the Cramping 1 (Cra1) phenotype, an autosomal dominant trait where affected animals display unusual twisting of the body and clenching of the hindlimbs when suspended by the tail. Heterozygotes suffer age-related progressive loss of muscle tone and locomotor ability without major reduction in life-span while homozygotes show a more severe phenotype with an inability to move or feed, and die within 24 hours of birth.</text>
</comment>
<comment type="similarity">
    <text evidence="9">Belongs to the dynein heavy chain family.</text>
</comment>
<protein>
    <recommendedName>
        <fullName>Cytoplasmic dynein 1 heavy chain 1</fullName>
    </recommendedName>
    <alternativeName>
        <fullName>Cytoplasmic dynein heavy chain 1</fullName>
    </alternativeName>
    <alternativeName>
        <fullName>Dynein heavy chain, cytosolic</fullName>
    </alternativeName>
</protein>
<feature type="initiator methionine" description="Removed" evidence="3">
    <location>
        <position position="1"/>
    </location>
</feature>
<feature type="chain" id="PRO_0000114628" description="Cytoplasmic dynein 1 heavy chain 1">
    <location>
        <begin position="2"/>
        <end position="4644"/>
    </location>
</feature>
<feature type="region of interest" description="Stem" evidence="1">
    <location>
        <begin position="2"/>
        <end position="1865"/>
    </location>
</feature>
<feature type="region of interest" description="Interaction with DYNC1I2" evidence="1">
    <location>
        <begin position="446"/>
        <end position="701"/>
    </location>
</feature>
<feature type="region of interest" description="Interaction with DYNC1LI2" evidence="1">
    <location>
        <begin position="649"/>
        <end position="800"/>
    </location>
</feature>
<feature type="region of interest" description="AAA 1" evidence="1">
    <location>
        <begin position="1866"/>
        <end position="2097"/>
    </location>
</feature>
<feature type="region of interest" description="AAA 2" evidence="1">
    <location>
        <begin position="2178"/>
        <end position="2450"/>
    </location>
</feature>
<feature type="region of interest" description="Disordered" evidence="5">
    <location>
        <begin position="2388"/>
        <end position="2408"/>
    </location>
</feature>
<feature type="region of interest" description="AAA 3" evidence="1">
    <location>
        <begin position="2554"/>
        <end position="2803"/>
    </location>
</feature>
<feature type="region of interest" description="AAA 4" evidence="1">
    <location>
        <begin position="2897"/>
        <end position="3166"/>
    </location>
</feature>
<feature type="region of interest" description="Stalk" evidence="1">
    <location>
        <begin position="3187"/>
        <end position="3498"/>
    </location>
</feature>
<feature type="region of interest" description="AAA 5" evidence="1">
    <location>
        <begin position="3551"/>
        <end position="3780"/>
    </location>
</feature>
<feature type="region of interest" description="AAA 6" evidence="1">
    <location>
        <begin position="4003"/>
        <end position="4219"/>
    </location>
</feature>
<feature type="coiled-coil region" evidence="4">
    <location>
        <begin position="48"/>
        <end position="69"/>
    </location>
</feature>
<feature type="coiled-coil region" evidence="4">
    <location>
        <begin position="179"/>
        <end position="200"/>
    </location>
</feature>
<feature type="coiled-coil region" evidence="4">
    <location>
        <begin position="453"/>
        <end position="476"/>
    </location>
</feature>
<feature type="coiled-coil region" evidence="4">
    <location>
        <begin position="541"/>
        <end position="564"/>
    </location>
</feature>
<feature type="coiled-coil region" evidence="4">
    <location>
        <begin position="1169"/>
        <end position="1201"/>
    </location>
</feature>
<feature type="coiled-coil region" evidence="4">
    <location>
        <begin position="1229"/>
        <end position="1250"/>
    </location>
</feature>
<feature type="coiled-coil region" evidence="4">
    <location>
        <begin position="1355"/>
        <end position="1371"/>
    </location>
</feature>
<feature type="coiled-coil region" evidence="4">
    <location>
        <begin position="3187"/>
        <end position="3273"/>
    </location>
</feature>
<feature type="coiled-coil region" evidence="4">
    <location>
        <begin position="3394"/>
        <end position="3498"/>
    </location>
</feature>
<feature type="coiled-coil region" evidence="4">
    <location>
        <begin position="3735"/>
        <end position="3798"/>
    </location>
</feature>
<feature type="binding site" evidence="4">
    <location>
        <begin position="1904"/>
        <end position="1911"/>
    </location>
    <ligand>
        <name>ATP</name>
        <dbReference type="ChEBI" id="CHEBI:30616"/>
    </ligand>
</feature>
<feature type="binding site" evidence="4">
    <location>
        <begin position="2222"/>
        <end position="2229"/>
    </location>
    <ligand>
        <name>ATP</name>
        <dbReference type="ChEBI" id="CHEBI:30616"/>
    </ligand>
</feature>
<feature type="binding site" evidence="4">
    <location>
        <begin position="2593"/>
        <end position="2600"/>
    </location>
    <ligand>
        <name>ATP</name>
        <dbReference type="ChEBI" id="CHEBI:30616"/>
    </ligand>
</feature>
<feature type="binding site" evidence="4">
    <location>
        <begin position="2935"/>
        <end position="2942"/>
    </location>
    <ligand>
        <name>ATP</name>
        <dbReference type="ChEBI" id="CHEBI:30616"/>
    </ligand>
</feature>
<feature type="modified residue" description="N-acetylserine" evidence="3">
    <location>
        <position position="2"/>
    </location>
</feature>
<feature type="modified residue" description="Phosphoserine" evidence="3">
    <location>
        <position position="68"/>
    </location>
</feature>
<feature type="modified residue" description="N6-acetyllysine" evidence="3">
    <location>
        <position position="1123"/>
    </location>
</feature>
<feature type="modified residue" description="Phosphoserine" evidence="10">
    <location>
        <position position="1228"/>
    </location>
</feature>
<feature type="modified residue" description="N6-acetyllysine" evidence="3">
    <location>
        <position position="3478"/>
    </location>
</feature>
<feature type="modified residue" description="Phosphoserine" evidence="3">
    <location>
        <position position="4160"/>
    </location>
</feature>
<feature type="modified residue" description="N6-acetyllysine" evidence="11">
    <location>
        <position position="4281"/>
    </location>
</feature>
<feature type="modified residue" description="Phosphothreonine" evidence="3">
    <location>
        <position position="4364"/>
    </location>
</feature>
<feature type="modified residue" description="Phosphoserine" evidence="3">
    <location>
        <position position="4366"/>
    </location>
</feature>
<feature type="sequence variant" description="In LOA." evidence="6">
    <original>F</original>
    <variation>Y</variation>
    <location>
        <position position="580"/>
    </location>
</feature>
<feature type="sequence variant" description="In CRA1." evidence="6">
    <original>Y</original>
    <variation>C</variation>
    <location>
        <position position="1055"/>
    </location>
</feature>
<feature type="sequence conflict" description="In Ref. 1; AAF91078." evidence="9" ref="1">
    <original>A</original>
    <variation>T</variation>
    <location>
        <position position="517"/>
    </location>
</feature>
<feature type="sequence conflict" description="In Ref. 1; AAF91078." evidence="9" ref="1">
    <original>F</original>
    <variation>L</variation>
    <location>
        <position position="2373"/>
    </location>
</feature>
<feature type="sequence conflict" description="In Ref. 1; AAF91078." evidence="9" ref="1">
    <original>G</original>
    <variation>A</variation>
    <location>
        <position position="2689"/>
    </location>
</feature>
<feature type="sequence conflict" description="In Ref. 1; AAF91078." evidence="9" ref="1">
    <original>D</original>
    <variation>V</variation>
    <location>
        <position position="3760"/>
    </location>
</feature>
<feature type="sequence conflict" description="In Ref. 1; AAF91078." evidence="9" ref="1">
    <original>I</original>
    <variation>V</variation>
    <location>
        <position position="3856"/>
    </location>
</feature>
<feature type="helix" evidence="12">
    <location>
        <begin position="3260"/>
        <end position="3295"/>
    </location>
</feature>
<feature type="helix" evidence="12">
    <location>
        <begin position="3299"/>
        <end position="3306"/>
    </location>
</feature>
<feature type="helix" evidence="12">
    <location>
        <begin position="3313"/>
        <end position="3325"/>
    </location>
</feature>
<feature type="helix" evidence="12">
    <location>
        <begin position="3333"/>
        <end position="3336"/>
    </location>
</feature>
<feature type="helix" evidence="12">
    <location>
        <begin position="3339"/>
        <end position="3341"/>
    </location>
</feature>
<feature type="helix" evidence="12">
    <location>
        <begin position="3345"/>
        <end position="3351"/>
    </location>
</feature>
<feature type="helix" evidence="12">
    <location>
        <begin position="3354"/>
        <end position="3356"/>
    </location>
</feature>
<feature type="helix" evidence="12">
    <location>
        <begin position="3359"/>
        <end position="3368"/>
    </location>
</feature>
<feature type="turn" evidence="12">
    <location>
        <begin position="3369"/>
        <end position="3371"/>
    </location>
</feature>
<feature type="helix" evidence="12">
    <location>
        <begin position="3377"/>
        <end position="3383"/>
    </location>
</feature>
<feature type="helix" evidence="12">
    <location>
        <begin position="3387"/>
        <end position="3427"/>
    </location>
</feature>
<feature type="turn" evidence="13">
    <location>
        <begin position="3455"/>
        <end position="3457"/>
    </location>
</feature>
<feature type="helix" evidence="13">
    <location>
        <begin position="3458"/>
        <end position="3471"/>
    </location>
</feature>
<gene>
    <name type="primary">Dync1h1</name>
    <name type="synonym">Dhc1</name>
    <name type="synonym">Dnch1</name>
    <name type="synonym">Dnchc1</name>
    <name type="synonym">Dyhc</name>
</gene>
<dbReference type="EMBL" id="AY004877">
    <property type="protein sequence ID" value="AAF91078.1"/>
    <property type="molecule type" value="mRNA"/>
</dbReference>
<dbReference type="EMBL" id="AC152827">
    <property type="status" value="NOT_ANNOTATED_CDS"/>
    <property type="molecule type" value="Genomic_DNA"/>
</dbReference>
<dbReference type="CCDS" id="CCDS36559.1"/>
<dbReference type="RefSeq" id="NP_084514.2">
    <property type="nucleotide sequence ID" value="NM_030238.2"/>
</dbReference>
<dbReference type="PDB" id="3ERR">
    <property type="method" value="X-ray"/>
    <property type="resolution" value="2.27 A"/>
    <property type="chains" value="A/B=3260-3427"/>
</dbReference>
<dbReference type="PDB" id="3J1T">
    <property type="method" value="EM"/>
    <property type="resolution" value="9.70 A"/>
    <property type="chains" value="A=3264-3427"/>
</dbReference>
<dbReference type="PDB" id="3J1U">
    <property type="method" value="EM"/>
    <property type="resolution" value="9.70 A"/>
    <property type="chains" value="A=3264-3427"/>
</dbReference>
<dbReference type="PDB" id="3WUQ">
    <property type="method" value="X-ray"/>
    <property type="resolution" value="3.50 A"/>
    <property type="chains" value="A=3207-3483"/>
</dbReference>
<dbReference type="PDB" id="5AYH">
    <property type="method" value="X-ray"/>
    <property type="resolution" value="3.01 A"/>
    <property type="chains" value="A=3207-3475"/>
</dbReference>
<dbReference type="PDB" id="6RZA">
    <property type="method" value="EM"/>
    <property type="resolution" value="5.40 A"/>
    <property type="chains" value="X=3270-3285, X=3410-3418"/>
</dbReference>
<dbReference type="PDB" id="6RZB">
    <property type="method" value="EM"/>
    <property type="resolution" value="5.00 A"/>
    <property type="chains" value="C=3270-3418"/>
</dbReference>
<dbReference type="PDBsum" id="3ERR"/>
<dbReference type="PDBsum" id="3J1T"/>
<dbReference type="PDBsum" id="3J1U"/>
<dbReference type="PDBsum" id="3WUQ"/>
<dbReference type="PDBsum" id="5AYH"/>
<dbReference type="PDBsum" id="6RZA"/>
<dbReference type="PDBsum" id="6RZB"/>
<dbReference type="BMRB" id="Q9JHU4"/>
<dbReference type="EMDB" id="EMD-10060"/>
<dbReference type="SMR" id="Q9JHU4"/>
<dbReference type="BioGRID" id="199254">
    <property type="interactions" value="78"/>
</dbReference>
<dbReference type="ComplexPortal" id="CPX-5699">
    <property type="entry name" value="Cytoplasmic dynein complex, variant 1"/>
</dbReference>
<dbReference type="FunCoup" id="Q9JHU4">
    <property type="interactions" value="2693"/>
</dbReference>
<dbReference type="IntAct" id="Q9JHU4">
    <property type="interactions" value="39"/>
</dbReference>
<dbReference type="MINT" id="Q9JHU4"/>
<dbReference type="STRING" id="10090.ENSMUSP00000018851"/>
<dbReference type="GlyGen" id="Q9JHU4">
    <property type="glycosylation" value="5 sites, 3 N-linked glycans (3 sites), 1 O-linked glycan (1 site)"/>
</dbReference>
<dbReference type="iPTMnet" id="Q9JHU4"/>
<dbReference type="MetOSite" id="Q9JHU4"/>
<dbReference type="PhosphoSitePlus" id="Q9JHU4"/>
<dbReference type="SwissPalm" id="Q9JHU4"/>
<dbReference type="jPOST" id="Q9JHU4"/>
<dbReference type="PaxDb" id="10090-ENSMUSP00000018851"/>
<dbReference type="PeptideAtlas" id="Q9JHU4"/>
<dbReference type="ProteomicsDB" id="277422"/>
<dbReference type="Pumba" id="Q9JHU4"/>
<dbReference type="Antibodypedia" id="122">
    <property type="antibodies" value="150 antibodies from 28 providers"/>
</dbReference>
<dbReference type="DNASU" id="13424"/>
<dbReference type="Ensembl" id="ENSMUST00000018851.14">
    <property type="protein sequence ID" value="ENSMUSP00000018851.8"/>
    <property type="gene ID" value="ENSMUSG00000018707.14"/>
</dbReference>
<dbReference type="GeneID" id="13424"/>
<dbReference type="KEGG" id="mmu:13424"/>
<dbReference type="UCSC" id="uc007pbo.1">
    <property type="organism name" value="mouse"/>
</dbReference>
<dbReference type="AGR" id="MGI:103147"/>
<dbReference type="CTD" id="1778"/>
<dbReference type="MGI" id="MGI:103147">
    <property type="gene designation" value="Dync1h1"/>
</dbReference>
<dbReference type="VEuPathDB" id="HostDB:ENSMUSG00000018707"/>
<dbReference type="eggNOG" id="KOG3595">
    <property type="taxonomic scope" value="Eukaryota"/>
</dbReference>
<dbReference type="GeneTree" id="ENSGT00940000156103"/>
<dbReference type="HOGENOM" id="CLU_000038_7_0_1"/>
<dbReference type="InParanoid" id="Q9JHU4"/>
<dbReference type="OMA" id="NERQMTR"/>
<dbReference type="OrthoDB" id="14187at2759"/>
<dbReference type="PhylomeDB" id="Q9JHU4"/>
<dbReference type="TreeFam" id="TF101165"/>
<dbReference type="Reactome" id="R-MMU-141444">
    <property type="pathway name" value="Amplification of signal from unattached kinetochores via a MAD2 inhibitory signal"/>
</dbReference>
<dbReference type="Reactome" id="R-MMU-2132295">
    <property type="pathway name" value="MHC class II antigen presentation"/>
</dbReference>
<dbReference type="Reactome" id="R-MMU-2467813">
    <property type="pathway name" value="Separation of Sister Chromatids"/>
</dbReference>
<dbReference type="Reactome" id="R-MMU-2500257">
    <property type="pathway name" value="Resolution of Sister Chromatid Cohesion"/>
</dbReference>
<dbReference type="Reactome" id="R-MMU-2565942">
    <property type="pathway name" value="Regulation of PLK1 Activity at G2/M Transition"/>
</dbReference>
<dbReference type="Reactome" id="R-MMU-3371497">
    <property type="pathway name" value="HSP90 chaperone cycle for steroid hormone receptors (SHR) in the presence of ligand"/>
</dbReference>
<dbReference type="Reactome" id="R-MMU-380259">
    <property type="pathway name" value="Loss of Nlp from mitotic centrosomes"/>
</dbReference>
<dbReference type="Reactome" id="R-MMU-380270">
    <property type="pathway name" value="Recruitment of mitotic centrosome proteins and complexes"/>
</dbReference>
<dbReference type="Reactome" id="R-MMU-380284">
    <property type="pathway name" value="Loss of proteins required for interphase microtubule organization from the centrosome"/>
</dbReference>
<dbReference type="Reactome" id="R-MMU-380320">
    <property type="pathway name" value="Recruitment of NuMA to mitotic centrosomes"/>
</dbReference>
<dbReference type="Reactome" id="R-MMU-5620912">
    <property type="pathway name" value="Anchoring of the basal body to the plasma membrane"/>
</dbReference>
<dbReference type="Reactome" id="R-MMU-5663220">
    <property type="pathway name" value="RHO GTPases Activate Formins"/>
</dbReference>
<dbReference type="Reactome" id="R-MMU-6798695">
    <property type="pathway name" value="Neutrophil degranulation"/>
</dbReference>
<dbReference type="Reactome" id="R-MMU-6807878">
    <property type="pathway name" value="COPI-mediated anterograde transport"/>
</dbReference>
<dbReference type="Reactome" id="R-MMU-6811436">
    <property type="pathway name" value="COPI-independent Golgi-to-ER retrograde traffic"/>
</dbReference>
<dbReference type="Reactome" id="R-MMU-68877">
    <property type="pathway name" value="Mitotic Prometaphase"/>
</dbReference>
<dbReference type="Reactome" id="R-MMU-8854518">
    <property type="pathway name" value="AURKA Activation by TPX2"/>
</dbReference>
<dbReference type="Reactome" id="R-MMU-9646399">
    <property type="pathway name" value="Aggrephagy"/>
</dbReference>
<dbReference type="Reactome" id="R-MMU-9648025">
    <property type="pathway name" value="EML4 and NUDC in mitotic spindle formation"/>
</dbReference>
<dbReference type="BioGRID-ORCS" id="13424">
    <property type="hits" value="26 hits in 77 CRISPR screens"/>
</dbReference>
<dbReference type="ChiTaRS" id="Dync1h1">
    <property type="organism name" value="mouse"/>
</dbReference>
<dbReference type="EvolutionaryTrace" id="Q9JHU4"/>
<dbReference type="PRO" id="PR:Q9JHU4"/>
<dbReference type="Proteomes" id="UP000000589">
    <property type="component" value="Chromosome 12"/>
</dbReference>
<dbReference type="RNAct" id="Q9JHU4">
    <property type="molecule type" value="protein"/>
</dbReference>
<dbReference type="Bgee" id="ENSMUSG00000018707">
    <property type="expression patterns" value="Expressed in cortical plate and 269 other cell types or tissues"/>
</dbReference>
<dbReference type="ExpressionAtlas" id="Q9JHU4">
    <property type="expression patterns" value="baseline and differential"/>
</dbReference>
<dbReference type="GO" id="GO:0005813">
    <property type="term" value="C:centrosome"/>
    <property type="evidence" value="ECO:0007669"/>
    <property type="project" value="Ensembl"/>
</dbReference>
<dbReference type="GO" id="GO:0005737">
    <property type="term" value="C:cytoplasm"/>
    <property type="evidence" value="ECO:0000314"/>
    <property type="project" value="MGI"/>
</dbReference>
<dbReference type="GO" id="GO:0005868">
    <property type="term" value="C:cytoplasmic dynein complex"/>
    <property type="evidence" value="ECO:0000255"/>
    <property type="project" value="MGI"/>
</dbReference>
<dbReference type="GO" id="GO:0030286">
    <property type="term" value="C:dynein complex"/>
    <property type="evidence" value="ECO:0000266"/>
    <property type="project" value="ComplexPortal"/>
</dbReference>
<dbReference type="GO" id="GO:0030175">
    <property type="term" value="C:filopodium"/>
    <property type="evidence" value="ECO:0000314"/>
    <property type="project" value="MGI"/>
</dbReference>
<dbReference type="GO" id="GO:0005874">
    <property type="term" value="C:microtubule"/>
    <property type="evidence" value="ECO:0007669"/>
    <property type="project" value="UniProtKB-KW"/>
</dbReference>
<dbReference type="GO" id="GO:0005524">
    <property type="term" value="F:ATP binding"/>
    <property type="evidence" value="ECO:0007669"/>
    <property type="project" value="UniProtKB-KW"/>
</dbReference>
<dbReference type="GO" id="GO:0016887">
    <property type="term" value="F:ATP hydrolysis activity"/>
    <property type="evidence" value="ECO:0007669"/>
    <property type="project" value="InterPro"/>
</dbReference>
<dbReference type="GO" id="GO:0045505">
    <property type="term" value="F:dynein intermediate chain binding"/>
    <property type="evidence" value="ECO:0007669"/>
    <property type="project" value="InterPro"/>
</dbReference>
<dbReference type="GO" id="GO:0051959">
    <property type="term" value="F:dynein light intermediate chain binding"/>
    <property type="evidence" value="ECO:0000353"/>
    <property type="project" value="MGI"/>
</dbReference>
<dbReference type="GO" id="GO:0042802">
    <property type="term" value="F:identical protein binding"/>
    <property type="evidence" value="ECO:0007669"/>
    <property type="project" value="Ensembl"/>
</dbReference>
<dbReference type="GO" id="GO:0008569">
    <property type="term" value="F:minus-end-directed microtubule motor activity"/>
    <property type="evidence" value="ECO:0007669"/>
    <property type="project" value="Ensembl"/>
</dbReference>
<dbReference type="GO" id="GO:0051301">
    <property type="term" value="P:cell division"/>
    <property type="evidence" value="ECO:0007669"/>
    <property type="project" value="UniProtKB-KW"/>
</dbReference>
<dbReference type="GO" id="GO:0003341">
    <property type="term" value="P:cilium movement"/>
    <property type="evidence" value="ECO:0000305"/>
    <property type="project" value="MGI"/>
</dbReference>
<dbReference type="GO" id="GO:0051293">
    <property type="term" value="P:establishment of spindle localization"/>
    <property type="evidence" value="ECO:0007669"/>
    <property type="project" value="Ensembl"/>
</dbReference>
<dbReference type="GO" id="GO:0033962">
    <property type="term" value="P:P-body assembly"/>
    <property type="evidence" value="ECO:0000315"/>
    <property type="project" value="BHF-UCL"/>
</dbReference>
<dbReference type="GO" id="GO:0120162">
    <property type="term" value="P:positive regulation of cold-induced thermogenesis"/>
    <property type="evidence" value="ECO:0000315"/>
    <property type="project" value="YuBioLab"/>
</dbReference>
<dbReference type="GO" id="GO:0032388">
    <property type="term" value="P:positive regulation of intracellular transport"/>
    <property type="evidence" value="ECO:0000250"/>
    <property type="project" value="UniProtKB"/>
</dbReference>
<dbReference type="GO" id="GO:1905832">
    <property type="term" value="P:positive regulation of spindle assembly"/>
    <property type="evidence" value="ECO:0000250"/>
    <property type="project" value="UniProtKB"/>
</dbReference>
<dbReference type="GO" id="GO:0090235">
    <property type="term" value="P:regulation of metaphase plate congression"/>
    <property type="evidence" value="ECO:0000250"/>
    <property type="project" value="UniProtKB"/>
</dbReference>
<dbReference type="GO" id="GO:0060236">
    <property type="term" value="P:regulation of mitotic spindle organization"/>
    <property type="evidence" value="ECO:0000250"/>
    <property type="project" value="UniProtKB"/>
</dbReference>
<dbReference type="GO" id="GO:0034063">
    <property type="term" value="P:stress granule assembly"/>
    <property type="evidence" value="ECO:0000315"/>
    <property type="project" value="BHF-UCL"/>
</dbReference>
<dbReference type="CDD" id="cd00009">
    <property type="entry name" value="AAA"/>
    <property type="match status" value="2"/>
</dbReference>
<dbReference type="FunFam" id="1.20.920.20:FF:000002">
    <property type="entry name" value="Cytoplasmic dynein 1 heavy chain"/>
    <property type="match status" value="1"/>
</dbReference>
<dbReference type="FunFam" id="3.40.50.300:FF:000122">
    <property type="entry name" value="Cytoplasmic dynein 1 heavy chain"/>
    <property type="match status" value="1"/>
</dbReference>
<dbReference type="FunFam" id="1.20.920.60:FF:000001">
    <property type="entry name" value="Cytoplasmic dynein 1 heavy chain 1"/>
    <property type="match status" value="1"/>
</dbReference>
<dbReference type="FunFam" id="1.10.8.1220:FF:000002">
    <property type="entry name" value="cytoplasmic dynein 1 heavy chain 1-like"/>
    <property type="match status" value="1"/>
</dbReference>
<dbReference type="FunFam" id="1.10.287.2620:FF:000001">
    <property type="entry name" value="Cytoplasmic dynein heavy chain 1"/>
    <property type="match status" value="1"/>
</dbReference>
<dbReference type="FunFam" id="1.10.472.130:FF:000002">
    <property type="entry name" value="Cytoplasmic dynein heavy chain 1"/>
    <property type="match status" value="1"/>
</dbReference>
<dbReference type="FunFam" id="1.10.8.710:FF:000005">
    <property type="entry name" value="Cytoplasmic dynein heavy chain 1"/>
    <property type="match status" value="1"/>
</dbReference>
<dbReference type="FunFam" id="1.20.140.100:FF:000002">
    <property type="entry name" value="Cytoplasmic dynein heavy chain 1"/>
    <property type="match status" value="1"/>
</dbReference>
<dbReference type="FunFam" id="1.20.58.1120:FF:000003">
    <property type="entry name" value="Cytoplasmic dynein heavy chain 1"/>
    <property type="match status" value="1"/>
</dbReference>
<dbReference type="FunFam" id="1.20.920.30:FF:000001">
    <property type="entry name" value="Cytoplasmic dynein heavy chain 1"/>
    <property type="match status" value="1"/>
</dbReference>
<dbReference type="FunFam" id="3.20.180.20:FF:000002">
    <property type="entry name" value="Cytoplasmic dynein heavy chain 1"/>
    <property type="match status" value="1"/>
</dbReference>
<dbReference type="FunFam" id="3.40.50.300:FF:000071">
    <property type="entry name" value="Cytoplasmic dynein heavy chain 1"/>
    <property type="match status" value="1"/>
</dbReference>
<dbReference type="FunFam" id="3.40.50.300:FF:000517">
    <property type="entry name" value="Cytoplasmic dynein heavy chain 1"/>
    <property type="match status" value="1"/>
</dbReference>
<dbReference type="FunFam" id="1.10.8.720:FF:000003">
    <property type="entry name" value="Cytoplasmic dynein heavy chain 2"/>
    <property type="match status" value="1"/>
</dbReference>
<dbReference type="FunFam" id="1.20.1270.280:FF:000004">
    <property type="entry name" value="Cytoplasmic dynein heavy chain 2"/>
    <property type="match status" value="1"/>
</dbReference>
<dbReference type="FunFam" id="3.10.490.20:FF:000004">
    <property type="entry name" value="Cytoplasmic dynein heavy chain 2"/>
    <property type="match status" value="1"/>
</dbReference>
<dbReference type="FunFam" id="3.40.50.300:FF:000373">
    <property type="entry name" value="Cytoplasmic dynein heavy chain 2"/>
    <property type="match status" value="1"/>
</dbReference>
<dbReference type="FunFam" id="3.40.50.300:FF:001956">
    <property type="entry name" value="Dynein cytoplasmic 1 heavy chain 1"/>
    <property type="match status" value="1"/>
</dbReference>
<dbReference type="FunFam" id="3.40.50.300:FF:002655">
    <property type="entry name" value="Dynein cytoplasmic 1 heavy chain 1"/>
    <property type="match status" value="1"/>
</dbReference>
<dbReference type="Gene3D" id="1.10.287.2620">
    <property type="match status" value="1"/>
</dbReference>
<dbReference type="Gene3D" id="1.10.472.130">
    <property type="match status" value="1"/>
</dbReference>
<dbReference type="Gene3D" id="1.10.8.1220">
    <property type="match status" value="1"/>
</dbReference>
<dbReference type="Gene3D" id="1.10.8.710">
    <property type="match status" value="1"/>
</dbReference>
<dbReference type="Gene3D" id="1.20.1270.280">
    <property type="match status" value="1"/>
</dbReference>
<dbReference type="Gene3D" id="1.20.58.1120">
    <property type="match status" value="1"/>
</dbReference>
<dbReference type="Gene3D" id="1.20.920.20">
    <property type="match status" value="2"/>
</dbReference>
<dbReference type="Gene3D" id="1.20.920.30">
    <property type="match status" value="1"/>
</dbReference>
<dbReference type="Gene3D" id="1.20.920.60">
    <property type="match status" value="1"/>
</dbReference>
<dbReference type="Gene3D" id="3.10.490.20">
    <property type="match status" value="1"/>
</dbReference>
<dbReference type="Gene3D" id="6.10.140.1060">
    <property type="match status" value="1"/>
</dbReference>
<dbReference type="Gene3D" id="1.20.140.100">
    <property type="entry name" value="Dynein heavy chain, N-terminal domain 2"/>
    <property type="match status" value="1"/>
</dbReference>
<dbReference type="Gene3D" id="3.20.180.20">
    <property type="entry name" value="Dynein heavy chain, N-terminal domain 2"/>
    <property type="match status" value="1"/>
</dbReference>
<dbReference type="Gene3D" id="3.40.50.300">
    <property type="entry name" value="P-loop containing nucleotide triphosphate hydrolases"/>
    <property type="match status" value="5"/>
</dbReference>
<dbReference type="Gene3D" id="1.10.8.720">
    <property type="entry name" value="Region D6 of dynein motor"/>
    <property type="match status" value="1"/>
</dbReference>
<dbReference type="InterPro" id="IPR003593">
    <property type="entry name" value="AAA+_ATPase"/>
</dbReference>
<dbReference type="InterPro" id="IPR035699">
    <property type="entry name" value="AAA_6"/>
</dbReference>
<dbReference type="InterPro" id="IPR035706">
    <property type="entry name" value="AAA_9"/>
</dbReference>
<dbReference type="InterPro" id="IPR041658">
    <property type="entry name" value="AAA_lid_11"/>
</dbReference>
<dbReference type="InterPro" id="IPR042219">
    <property type="entry name" value="AAA_lid_11_sf"/>
</dbReference>
<dbReference type="InterPro" id="IPR026983">
    <property type="entry name" value="DHC"/>
</dbReference>
<dbReference type="InterPro" id="IPR054354">
    <property type="entry name" value="DYNC2H1-like_lid"/>
</dbReference>
<dbReference type="InterPro" id="IPR042222">
    <property type="entry name" value="Dynein_2_N"/>
</dbReference>
<dbReference type="InterPro" id="IPR043157">
    <property type="entry name" value="Dynein_AAA1S"/>
</dbReference>
<dbReference type="InterPro" id="IPR041466">
    <property type="entry name" value="Dynein_AAA5_ext"/>
</dbReference>
<dbReference type="InterPro" id="IPR041228">
    <property type="entry name" value="Dynein_C"/>
</dbReference>
<dbReference type="InterPro" id="IPR043160">
    <property type="entry name" value="Dynein_C_barrel"/>
</dbReference>
<dbReference type="InterPro" id="IPR024743">
    <property type="entry name" value="Dynein_HC_stalk"/>
</dbReference>
<dbReference type="InterPro" id="IPR024317">
    <property type="entry name" value="Dynein_heavy_chain_D4_dom"/>
</dbReference>
<dbReference type="InterPro" id="IPR004273">
    <property type="entry name" value="Dynein_heavy_D6_P-loop"/>
</dbReference>
<dbReference type="InterPro" id="IPR013602">
    <property type="entry name" value="Dynein_heavy_linker"/>
</dbReference>
<dbReference type="InterPro" id="IPR013594">
    <property type="entry name" value="Dynein_heavy_tail"/>
</dbReference>
<dbReference type="InterPro" id="IPR042228">
    <property type="entry name" value="Dynein_linker_3"/>
</dbReference>
<dbReference type="InterPro" id="IPR027417">
    <property type="entry name" value="P-loop_NTPase"/>
</dbReference>
<dbReference type="PANTHER" id="PTHR46532:SF13">
    <property type="entry name" value="CYTOPLASMIC DYNEIN 1 HEAVY CHAIN 1"/>
    <property type="match status" value="1"/>
</dbReference>
<dbReference type="PANTHER" id="PTHR46532">
    <property type="entry name" value="MALE FERTILITY FACTOR KL5"/>
    <property type="match status" value="1"/>
</dbReference>
<dbReference type="Pfam" id="PF12774">
    <property type="entry name" value="AAA_6"/>
    <property type="match status" value="1"/>
</dbReference>
<dbReference type="Pfam" id="PF12775">
    <property type="entry name" value="AAA_7"/>
    <property type="match status" value="1"/>
</dbReference>
<dbReference type="Pfam" id="PF12780">
    <property type="entry name" value="AAA_8"/>
    <property type="match status" value="1"/>
</dbReference>
<dbReference type="Pfam" id="PF12781">
    <property type="entry name" value="AAA_9"/>
    <property type="match status" value="1"/>
</dbReference>
<dbReference type="Pfam" id="PF18198">
    <property type="entry name" value="AAA_lid_11"/>
    <property type="match status" value="1"/>
</dbReference>
<dbReference type="Pfam" id="PF08385">
    <property type="entry name" value="DHC_N1"/>
    <property type="match status" value="1"/>
</dbReference>
<dbReference type="Pfam" id="PF08393">
    <property type="entry name" value="DHC_N2"/>
    <property type="match status" value="1"/>
</dbReference>
<dbReference type="Pfam" id="PF22597">
    <property type="entry name" value="DYN_lid"/>
    <property type="match status" value="1"/>
</dbReference>
<dbReference type="Pfam" id="PF17852">
    <property type="entry name" value="Dynein_AAA_lid"/>
    <property type="match status" value="1"/>
</dbReference>
<dbReference type="Pfam" id="PF18199">
    <property type="entry name" value="Dynein_C"/>
    <property type="match status" value="1"/>
</dbReference>
<dbReference type="Pfam" id="PF03028">
    <property type="entry name" value="Dynein_heavy"/>
    <property type="match status" value="1"/>
</dbReference>
<dbReference type="Pfam" id="PF12777">
    <property type="entry name" value="MT"/>
    <property type="match status" value="1"/>
</dbReference>
<dbReference type="SMART" id="SM00382">
    <property type="entry name" value="AAA"/>
    <property type="match status" value="4"/>
</dbReference>
<dbReference type="SUPFAM" id="SSF52540">
    <property type="entry name" value="P-loop containing nucleoside triphosphate hydrolases"/>
    <property type="match status" value="4"/>
</dbReference>
<evidence type="ECO:0000250" key="1"/>
<evidence type="ECO:0000250" key="2">
    <source>
        <dbReference type="UniProtKB" id="P38650"/>
    </source>
</evidence>
<evidence type="ECO:0000250" key="3">
    <source>
        <dbReference type="UniProtKB" id="Q14204"/>
    </source>
</evidence>
<evidence type="ECO:0000255" key="4"/>
<evidence type="ECO:0000256" key="5">
    <source>
        <dbReference type="SAM" id="MobiDB-lite"/>
    </source>
</evidence>
<evidence type="ECO:0000269" key="6">
    <source>
    </source>
</evidence>
<evidence type="ECO:0000269" key="7">
    <source>
    </source>
</evidence>
<evidence type="ECO:0000269" key="8">
    <source>
    </source>
</evidence>
<evidence type="ECO:0000305" key="9"/>
<evidence type="ECO:0007744" key="10">
    <source>
    </source>
</evidence>
<evidence type="ECO:0007744" key="11">
    <source>
    </source>
</evidence>
<evidence type="ECO:0007829" key="12">
    <source>
        <dbReference type="PDB" id="3ERR"/>
    </source>
</evidence>
<evidence type="ECO:0007829" key="13">
    <source>
        <dbReference type="PDB" id="5AYH"/>
    </source>
</evidence>
<reference key="1">
    <citation type="submission" date="2000-07" db="EMBL/GenBank/DDBJ databases">
        <title>Complete cDNA sequence of murine cytoplasmic dynein heavy chain.</title>
        <authorList>
            <person name="Sasaki S."/>
            <person name="Shionoya A."/>
            <person name="Hirotsune S."/>
        </authorList>
    </citation>
    <scope>NUCLEOTIDE SEQUENCE [MRNA]</scope>
    <source>
        <strain>FVB/NJ</strain>
    </source>
</reference>
<reference key="2">
    <citation type="journal article" date="2009" name="PLoS Biol.">
        <title>Lineage-specific biology revealed by a finished genome assembly of the mouse.</title>
        <authorList>
            <person name="Church D.M."/>
            <person name="Goodstadt L."/>
            <person name="Hillier L.W."/>
            <person name="Zody M.C."/>
            <person name="Goldstein S."/>
            <person name="She X."/>
            <person name="Bult C.J."/>
            <person name="Agarwala R."/>
            <person name="Cherry J.L."/>
            <person name="DiCuccio M."/>
            <person name="Hlavina W."/>
            <person name="Kapustin Y."/>
            <person name="Meric P."/>
            <person name="Maglott D."/>
            <person name="Birtle Z."/>
            <person name="Marques A.C."/>
            <person name="Graves T."/>
            <person name="Zhou S."/>
            <person name="Teague B."/>
            <person name="Potamousis K."/>
            <person name="Churas C."/>
            <person name="Place M."/>
            <person name="Herschleb J."/>
            <person name="Runnheim R."/>
            <person name="Forrest D."/>
            <person name="Amos-Landgraf J."/>
            <person name="Schwartz D.C."/>
            <person name="Cheng Z."/>
            <person name="Lindblad-Toh K."/>
            <person name="Eichler E.E."/>
            <person name="Ponting C.P."/>
        </authorList>
    </citation>
    <scope>NUCLEOTIDE SEQUENCE [LARGE SCALE GENOMIC DNA]</scope>
    <source>
        <strain>C57BL/6J</strain>
    </source>
</reference>
<reference key="3">
    <citation type="journal article" date="2003" name="Science">
        <title>Mutations in dynein link motor neuron degeneration to defects in retrograde transport.</title>
        <authorList>
            <person name="Hafezparast M."/>
            <person name="Klocke R."/>
            <person name="Ruhrberg C."/>
            <person name="Marquardt A."/>
            <person name="Ahmad-Annuar A."/>
            <person name="Bowen S."/>
            <person name="Lalli G."/>
            <person name="Witherden A.S."/>
            <person name="Hummerich H."/>
            <person name="Nicholson S."/>
            <person name="Morgan P.J."/>
            <person name="Oozageer R."/>
            <person name="Priestley J.V."/>
            <person name="Averill S."/>
            <person name="King V.R."/>
            <person name="Ball S."/>
            <person name="Peters J."/>
            <person name="Toda T."/>
            <person name="Yamamoto A."/>
            <person name="Hiraoka Y."/>
            <person name="Augustin M."/>
            <person name="Korthaus D."/>
            <person name="Wattler S."/>
            <person name="Wabnitz P."/>
            <person name="Dickneite C."/>
            <person name="Lampel S."/>
            <person name="Boehme F."/>
            <person name="Peraus G."/>
            <person name="Popp A."/>
            <person name="Rudelius M."/>
            <person name="Schlegel J."/>
            <person name="Fuchs H."/>
            <person name="de Angelis M.H."/>
            <person name="Schiavo G."/>
            <person name="Shima D.T."/>
            <person name="Russ A.P."/>
            <person name="Stumm G."/>
            <person name="Martin J.E."/>
            <person name="Fisher E.M.C."/>
        </authorList>
    </citation>
    <scope>INVOLVEMENT IN MOTOR NEURON DEGENERATION</scope>
    <scope>VARIANT LOA TYR-580</scope>
    <scope>VARIANT CRA1 CYS-1055</scope>
</reference>
<reference key="4">
    <citation type="journal article" date="2006" name="Mol. Reprod. Dev.">
        <title>The murine Dnali1 gene encodes a flagellar protein that interacts with the cytoplasmic dynein heavy chain 1.</title>
        <authorList>
            <person name="Rashid S."/>
            <person name="Breckle R."/>
            <person name="Hupe M."/>
            <person name="Geisler S."/>
            <person name="Doerwald N."/>
            <person name="Neesen J."/>
        </authorList>
    </citation>
    <scope>INTERACTION WITH DNALI1</scope>
</reference>
<reference key="5">
    <citation type="journal article" date="2008" name="J. Proteome Res.">
        <title>Large-scale identification and evolution indexing of tyrosine phosphorylation sites from murine brain.</title>
        <authorList>
            <person name="Ballif B.A."/>
            <person name="Carey G.R."/>
            <person name="Sunyaev S.R."/>
            <person name="Gygi S.P."/>
        </authorList>
    </citation>
    <scope>IDENTIFICATION BY MASS SPECTROMETRY [LARGE SCALE ANALYSIS]</scope>
    <source>
        <tissue>Brain</tissue>
    </source>
</reference>
<reference key="6">
    <citation type="journal article" date="2010" name="Cell">
        <title>A tissue-specific atlas of mouse protein phosphorylation and expression.</title>
        <authorList>
            <person name="Huttlin E.L."/>
            <person name="Jedrychowski M.P."/>
            <person name="Elias J.E."/>
            <person name="Goswami T."/>
            <person name="Rad R."/>
            <person name="Beausoleil S.A."/>
            <person name="Villen J."/>
            <person name="Haas W."/>
            <person name="Sowa M.E."/>
            <person name="Gygi S.P."/>
        </authorList>
    </citation>
    <scope>PHOSPHORYLATION [LARGE SCALE ANALYSIS] AT SER-1228</scope>
    <scope>IDENTIFICATION BY MASS SPECTROMETRY [LARGE SCALE ANALYSIS]</scope>
    <source>
        <tissue>Brain</tissue>
        <tissue>Brown adipose tissue</tissue>
        <tissue>Heart</tissue>
        <tissue>Kidney</tissue>
        <tissue>Liver</tissue>
        <tissue>Lung</tissue>
        <tissue>Pancreas</tissue>
        <tissue>Spleen</tissue>
        <tissue>Testis</tissue>
    </source>
</reference>
<reference key="7">
    <citation type="journal article" date="2012" name="Mol. Biol. Cell">
        <title>BICD2, dynactin, and LIS1 cooperate in regulating dynein recruitment to cellular structures.</title>
        <authorList>
            <person name="Splinter D."/>
            <person name="Razafsky D.S."/>
            <person name="Schlager M.A."/>
            <person name="Serra-Marques A."/>
            <person name="Grigoriev I."/>
            <person name="Demmers J."/>
            <person name="Keijzer N."/>
            <person name="Jiang K."/>
            <person name="Poser I."/>
            <person name="Hyman A.A."/>
            <person name="Hoogenraad C.C."/>
            <person name="King S.J."/>
            <person name="Akhmanova A."/>
        </authorList>
    </citation>
    <scope>INTERACTION WITH BICD2</scope>
</reference>
<reference key="8">
    <citation type="journal article" date="2013" name="Mol. Cell">
        <title>SIRT5-mediated lysine desuccinylation impacts diverse metabolic pathways.</title>
        <authorList>
            <person name="Park J."/>
            <person name="Chen Y."/>
            <person name="Tishkoff D.X."/>
            <person name="Peng C."/>
            <person name="Tan M."/>
            <person name="Dai L."/>
            <person name="Xie Z."/>
            <person name="Zhang Y."/>
            <person name="Zwaans B.M."/>
            <person name="Skinner M.E."/>
            <person name="Lombard D.B."/>
            <person name="Zhao Y."/>
        </authorList>
    </citation>
    <scope>ACETYLATION [LARGE SCALE ANALYSIS] AT LYS-4281</scope>
    <scope>IDENTIFICATION BY MASS SPECTROMETRY [LARGE SCALE ANALYSIS]</scope>
    <source>
        <tissue>Embryonic fibroblast</tissue>
    </source>
</reference>
<sequence>MSEPGGGEDGSAGLEVSAVQNVADVAVLQKHLRKLVPLLLEDGGDAPAALEAALEEKSALEQMRKFLSDPQVHTVLVERSTLKEDVGDEGEEEKEFISYNINIDIHYGVKSNSLAFIKRAPVIDADKPVSSQLRVLTLSEDSPYETLHSFISNAVAPFFKSYIRESGKADRDGDKMAPSVEKKIAELEMGLLHLQQNIEIPEISLPIHPIITNVAKQCYERGEKPKVTDFGDKVEDPTFLNQLQSGVNRWIREIQKVTKLDRDPASGTALQEISFWLNLERALYRIQEKRESPEVLLTLDILKHGKRFHATVSFDTDTGLKQALETVNDYNPLMKDFPLNDLLSATELDKIRQALVAIFTHLRKIRNTKYPIQRALRLVEAISRDLSSQLLKVLGTRKLMHVAYEEFEKVMVACFEVFQTWDDEYEKLQVLLRDIVKRKREENLKMVWRINPAHRKLQARLDQMRKFRRQHEQLRAVIVRVLRPQVTAVAQQNQGEAPEPQDMKVAEVLFDAADANAIEEVNLAYENVKEVDGLDVSKEGTEAWEAAMKRYDERIDRVETRITARLRDQLGTAKNANEMFRIFSRFNALFVRPHIRGAIREYQTQLIQRVKDDIESLHDKFKVQYPQSQACKMSHVRDLPPVSGSIIWAKQIDRQLTAYMKRVEDVLGKGWENHVEGQKLKQDGDSFRMKLNTQEIFDDWARKVQQRNLGVSGRIFTIESARVRGRTGNVLKLKVNFLPEIITLSKEVRNLKWLGFRVPLAIVNKAHQANQLYPFAISLIESVRTYERTCEKVEERNTISLLVAGLKKEVQALIAEGIALVWESYKLDPYVQRLAETVFNFQEKVDDLLIIEEKIDLEVRSLETCMYDHKTFSEILNRVQKAVDDLNLHSYSNLPIWVNKLDMEIERILGVRLQAGLRAWTQVLLGQAEDKAEVDMDTDAPQVSHKPGGEPKIKNVVHELRITNQVIYLNPPIEECRYKLYQEMFAWKMVVLSLPRIQSQRYQVGVHYELTEEEKFYRNALTRMPDGPVALEESYSAVMGIVTEVEQYVKVWLQYQCLWDMQAENIYNRLGEDLNKWQALLVQIRKARGTFDNAETKKEFGPVVIDYGKVQSKVNLKYDSWHKEVLSKFGQMLGSNMTEFHSQISKSRQELEQHSVDTASTSDAVTFITYVQSLKRKIKQFEKQVELYRNGQRLLEKQRFQFPPSWLYIDNIEGEWGAFNDIMRRKDSAIQQQVANLQMKIVQEDRAVESRTTDLLTDWEKTKPVTGNLRPEEALQALTIYEGKFGRLKDDREKCAKAKEALELTDTGLLSGSEERVQVALEELQDLKGVWSELSKVWEQIDQMKEQPWVSVQPRKLRQNLDGLLNQLKNFPARLRQYASYEFVQRLLKGYMKINMLVIELKSEALKDRHWKQLMKRLHVNWVVSELTLGQIWDVDLQKNEAVVKDVLLVAQGEMALEEFLKQIREVWNTYELDLVNYQNKCRLIRGWDDLFNKVKEHINSVSAMKLSPYYKVFEEDALSWEDKLNRIMALFDVWIDVQRRWVYLEGIFTGSADIKHLLPVETQRFQSISTEFLALMKKVSKSPLVMDVLNIQGVQRSLERLADLLGKIQKALGEYLERERSSFPRFYFVGDEDLLEIIGNSKNVAKLQKHFKKMFAGVSSIILNEDNSVVLGISSREGEEVMFKTPVSITEHPKINEWLTLVEKEMRVTLAKLLAESVTEVEIFGKATSIDPNTYITWIDKYQAQLVVLSAQIAWSENVENALSNVGGGGDVGPLQSVLSNVEVTLNVLADSVLMEQPPLRRRKLEHLITELVHQRDVTRSLIKSKIDNAKSFEWLSQMRFYFDPKQTDVLQQLSIQMANAKFNYGFEYLGVQDKLVQTPLTDRCYLTMTQALEARLGGSPFGPAGTGKTESVKALGHQLGRFVLVFNCDETFDFQAMGRIFVGLCQVGAWGCFDEFNRLEERMLSAVSQQVQCIQEALREHSNPNYDKTSAPITCELLNKQVKVSPDMAIFITMNPGYAGRSNLPDNLKKLFRSLAMTKPDRQLIAQVMLYSQGFRTAEVLANKIVPFFKLCDEQLSSQSHYDFGLRALKSVLVSAGNVKRERIQKIKREKEERGEAVDEGEIAENLPEQEILIQSVCETMVPKLVAEDIPLLFSLLSDVFPGVQYHRGEMTALREELKKVCQEMYLTYGDGEEVGGMWVEKVLQLYQITQINHGLMMVGPSGSGKSMAWRVLLKALERLEGVEGVAHIIDPKAISKDHLYGTLDPNTREWTDGLFTHVLRKIIDNVRGELQKRQWIVFDGDVDPEWVENLNSVLDDNKLLTLPNGERLSLPPNVRIMFEVQDLKYATLATVSRCGMVWFSEDVLSTDMIFNNFLARLRSIPLDEGEDEAQRRRKGKEDEGEEAASPMLQIQRDAATIMQPYFTSNGLVTKALEHAFKLEHIMDLTRLRCLGSLFSMLHQACRNVAQYNANHPDFPMQIEQLERYIQRYLVYAILWSLSGDSRLKMRAELGEYIRRITTVPLPTAPNVPIIDYEVSISGEWSPWQAKVPQIEVETHKVAAPDVVVPTLDTVRHEALLYTWLAEHKPLVLCGPPGSGKTMTLFSALRALPDMEVVGLNFSSATTPELLLKTFDHYCEYRRTPNGVVLAPVQLGKWLVLFCDEINLPDMDKYGTQRVISFIRQMVEHGGFYRTSDQTWVKLERIQFVGACNPPTDPGRKPLSHRFLRHVPVVYVDYPGPASLTQIYGTFNRAMLRLIPSLRTYAEPLTAAMVEFYTMSQERFTQDTQPHYIYSPREMTRWVRGIFEALRPLETLPVEGLIRIWAHEALRLFQDRLVEDEERRWTDENIDMVALKHFPNIDKEKAMSRPILYSNWLSKDYIPVDQEELRDYVKARLKVFYEEELDVPLVLFNEVLDHVLRIDRIFRQPQGHLLLIGVSGAGKTTLSRFVAWMNGLSVYQIKVHRKYTGEDFDEDLRTVLRRSGCKNEKIAFIMDESNVLDSGFLERMNTLLANGEVPGLFEGDEYATLMTQCKEGAQKEGLMLDSHEELYKWFTSQVIRNLHVVFTMNPSSEGLKDRAATSPALFNRCVLNWFGDWSTEALYQVGKEFTSKMDLEKPNYIVPDYMPVVYDKLPQPPTHREAIVNSCVFVHQTLHQANARLAKRGGRTMAITPRHYLDFINHYANLFHEKRSELEEQQMHLNVGLRKIKETVDQVEELRRDLRIKSQELEVKNAAANDKLKKMVKDQQEAEKKKVMSQEIQEQLHKQQEVIADKQMSVKEDLDKVEPAVIEAQNAVKSIKKQHLVEVRSMANPPAAVKLALESICLLLGESTTDWKQIRSIIMRENFIPTIVNFSAEEISDAIREKMKKNYMSNPSYNYEIVNRASLACGPMVKWAIAQLNYADMLKRVEPLRNELQKLEDDAKDNQQKANEVEQMIRDLEASIARYKEEYAVLISEAQAIKADLAAVEAKVNRSTALLKSLSAERERWEKTSETFKNQMSTIAGDCLLSAAFIAYAGYFDQQMRQNLFTTWSHHLQQANIQFRTDIARTEYLSNADERLRWQASSLPADDLCTENAIMLKRFNRYPLIIDPSGQATEFIMNEYKDRKITRTSFLDDAFRKNLESALRFGNPLLVQDVESYDPVLNPVLNREVRRTGGRVLITLGDQDIDLSPSFVIFLSTRDPTVEFPPDLCSRVTFVNFTVTRSSLQSQCLNEVLKAERPDVDEKRSDLLKLQGEFQLRLRQLEKSLLQALNEVKGRILDDDTIITTLENLKREAAEVTRKVEETDIVMQEVETVSQQYLPLSTACSSIYFTMESLKQVHFLYQYSLQFFLDIYHNVLYENPNLKGATDHTQRLSIITKDLFQVAFNRVARGMLHQDHITFAMLLARIKLKGTVGEPTYDAEFQHFLRGKEIVLSAGSTPKIQGLTVEQAEAVVRLSCLPAFKDLIAKVQADEQFGIWLDSSSPEQTVPYLWSEETPTTPIGQAIHRLLLIQAFRPDRLLAMAHMFVSTNLGESFMSIMEQPLDLTHIVGTEVKPNTPVLMCSVPGYDASGHVEDLAAEQNTQITSIAIGSAEGFNQADKAINTAVKSGRWVMLKNVHLAPGWLMQLEKKLHSLQPHACFRLFLTMEINPKVPVNLLRAGRIFVFEPPPGVKANMLRTFSSIPVSRICKSPNERARLYFLLAWFHAIIQERLRYAPLGWSKKYEFGESDLRSACDTVDTWLDDTAKGRQNISPDKIPWSALKTLMAQSIYGGRVDNEFDQRLLNTFLERLFTTRSFDSEFKLACKVDGHKDIQMPDGIRREEFVQWVELLPDAQTPSWLGLPNNAERVLLTTQGVDMISKMLKMQMLEDEDDLAYAETEKKARTDSTSDGRPAWMRTLHTTASNWLHLIPQTLSPLKRTVENIKDPLFRFFEREVKMGAKLLQDVRQDLADVVQVCEGKKKQTNYLRTLINELVKGILPRSWSHYTVPAGMTVIQWVSDFSERIKQLQNISQAAASGGAKELKNIHVCLGGLFVPEAYITATRQYVAQANSWSLEELCLEVNVTASQSATLDACSFGVTGLKLQGATCSNNKLSLSNAISTVLPLTQLRWVKQTSAEKKASVVTLPVYLNFTRADLIFTVDFEIATKEDPRSFYERGVAVLCTE</sequence>
<keyword id="KW-0002">3D-structure</keyword>
<keyword id="KW-0007">Acetylation</keyword>
<keyword id="KW-0067">ATP-binding</keyword>
<keyword id="KW-0131">Cell cycle</keyword>
<keyword id="KW-0132">Cell division</keyword>
<keyword id="KW-0175">Coiled coil</keyword>
<keyword id="KW-0963">Cytoplasm</keyword>
<keyword id="KW-0206">Cytoskeleton</keyword>
<keyword id="KW-0225">Disease variant</keyword>
<keyword id="KW-0243">Dynein</keyword>
<keyword id="KW-0493">Microtubule</keyword>
<keyword id="KW-0498">Mitosis</keyword>
<keyword id="KW-0505">Motor protein</keyword>
<keyword id="KW-0547">Nucleotide-binding</keyword>
<keyword id="KW-0597">Phosphoprotein</keyword>
<keyword id="KW-1185">Reference proteome</keyword>
<keyword id="KW-0677">Repeat</keyword>
<keyword id="KW-0813">Transport</keyword>
<proteinExistence type="evidence at protein level"/>
<name>DYHC1_MOUSE</name>
<accession>Q9JHU4</accession>
<accession>E9QM71</accession>